<reference key="1">
    <citation type="journal article" date="2001" name="Nature">
        <title>Massive gene decay in the leprosy bacillus.</title>
        <authorList>
            <person name="Cole S.T."/>
            <person name="Eiglmeier K."/>
            <person name="Parkhill J."/>
            <person name="James K.D."/>
            <person name="Thomson N.R."/>
            <person name="Wheeler P.R."/>
            <person name="Honore N."/>
            <person name="Garnier T."/>
            <person name="Churcher C.M."/>
            <person name="Harris D.E."/>
            <person name="Mungall K.L."/>
            <person name="Basham D."/>
            <person name="Brown D."/>
            <person name="Chillingworth T."/>
            <person name="Connor R."/>
            <person name="Davies R.M."/>
            <person name="Devlin K."/>
            <person name="Duthoy S."/>
            <person name="Feltwell T."/>
            <person name="Fraser A."/>
            <person name="Hamlin N."/>
            <person name="Holroyd S."/>
            <person name="Hornsby T."/>
            <person name="Jagels K."/>
            <person name="Lacroix C."/>
            <person name="Maclean J."/>
            <person name="Moule S."/>
            <person name="Murphy L.D."/>
            <person name="Oliver K."/>
            <person name="Quail M.A."/>
            <person name="Rajandream M.A."/>
            <person name="Rutherford K.M."/>
            <person name="Rutter S."/>
            <person name="Seeger K."/>
            <person name="Simon S."/>
            <person name="Simmonds M."/>
            <person name="Skelton J."/>
            <person name="Squares R."/>
            <person name="Squares S."/>
            <person name="Stevens K."/>
            <person name="Taylor K."/>
            <person name="Whitehead S."/>
            <person name="Woodward J.R."/>
            <person name="Barrell B.G."/>
        </authorList>
    </citation>
    <scope>NUCLEOTIDE SEQUENCE [LARGE SCALE GENOMIC DNA]</scope>
    <source>
        <strain>TN</strain>
    </source>
</reference>
<comment type="function">
    <text evidence="2">Cargo protein of a type 2A encapsulin nanocompartment involved in sulfur metabolism. Cysteine desulfurases mobilize the sulfur from L-cysteine to yield L-alanine, an essential step in sulfur metabolism for biosynthesis of a variety of sulfur-containing biomolecules.</text>
</comment>
<comment type="catalytic activity">
    <reaction evidence="2">
        <text>(sulfur carrier)-H + L-cysteine = (sulfur carrier)-SH + L-alanine</text>
        <dbReference type="Rhea" id="RHEA:43892"/>
        <dbReference type="Rhea" id="RHEA-COMP:14737"/>
        <dbReference type="Rhea" id="RHEA-COMP:14739"/>
        <dbReference type="ChEBI" id="CHEBI:29917"/>
        <dbReference type="ChEBI" id="CHEBI:35235"/>
        <dbReference type="ChEBI" id="CHEBI:57972"/>
        <dbReference type="ChEBI" id="CHEBI:64428"/>
        <dbReference type="EC" id="2.8.1.7"/>
    </reaction>
</comment>
<comment type="cofactor">
    <cofactor evidence="1">
        <name>pyridoxal 5'-phosphate</name>
        <dbReference type="ChEBI" id="CHEBI:597326"/>
    </cofactor>
</comment>
<comment type="subunit">
    <text evidence="2">There are 1-2 copies of this protein in each type 2A encapsulin shell.</text>
</comment>
<comment type="subcellular location">
    <subcellularLocation>
        <location evidence="2">Encapsulin nanocompartment</location>
    </subcellularLocation>
</comment>
<comment type="similarity">
    <text evidence="3">Belongs to the class-V pyridoxal-phosphate-dependent aminotransferase family. Csd subfamily.</text>
</comment>
<comment type="sequence caution" evidence="3">
    <conflict type="erroneous initiation">
        <sequence resource="EMBL-CDS" id="CAC31223"/>
    </conflict>
    <text>Truncated N-terminus.</text>
</comment>
<evidence type="ECO:0000250" key="1">
    <source>
        <dbReference type="UniProtKB" id="P77444"/>
    </source>
</evidence>
<evidence type="ECO:0000250" key="2">
    <source>
        <dbReference type="UniProtKB" id="Q8KUU5"/>
    </source>
</evidence>
<evidence type="ECO:0000305" key="3"/>
<keyword id="KW-1284">Encapsulin nanocompartment</keyword>
<keyword id="KW-0663">Pyridoxal phosphate</keyword>
<keyword id="KW-1185">Reference proteome</keyword>
<keyword id="KW-0808">Transferase</keyword>
<dbReference type="EC" id="2.8.1.7"/>
<dbReference type="EMBL" id="Z98741">
    <property type="protein sequence ID" value="CAB11409.1"/>
    <property type="molecule type" value="Genomic_DNA"/>
</dbReference>
<dbReference type="EMBL" id="AL583920">
    <property type="protein sequence ID" value="CAC31223.1"/>
    <property type="status" value="ALT_INIT"/>
    <property type="molecule type" value="Genomic_DNA"/>
</dbReference>
<dbReference type="PIR" id="D87014">
    <property type="entry name" value="D87014"/>
</dbReference>
<dbReference type="PIR" id="T44909">
    <property type="entry name" value="T44909"/>
</dbReference>
<dbReference type="SMR" id="O32975"/>
<dbReference type="STRING" id="272631.gene:17574668"/>
<dbReference type="KEGG" id="mle:ML0842"/>
<dbReference type="Leproma" id="ML0842"/>
<dbReference type="eggNOG" id="COG0520">
    <property type="taxonomic scope" value="Bacteria"/>
</dbReference>
<dbReference type="HOGENOM" id="CLU_003433_2_5_11"/>
<dbReference type="Proteomes" id="UP000000806">
    <property type="component" value="Chromosome"/>
</dbReference>
<dbReference type="GO" id="GO:0140737">
    <property type="term" value="C:encapsulin nanocompartment"/>
    <property type="evidence" value="ECO:0000305"/>
    <property type="project" value="UniProtKB"/>
</dbReference>
<dbReference type="GO" id="GO:0031071">
    <property type="term" value="F:cysteine desulfurase activity"/>
    <property type="evidence" value="ECO:0007669"/>
    <property type="project" value="UniProtKB-EC"/>
</dbReference>
<dbReference type="GO" id="GO:0030170">
    <property type="term" value="F:pyridoxal phosphate binding"/>
    <property type="evidence" value="ECO:0007669"/>
    <property type="project" value="InterPro"/>
</dbReference>
<dbReference type="GO" id="GO:0006534">
    <property type="term" value="P:cysteine metabolic process"/>
    <property type="evidence" value="ECO:0007669"/>
    <property type="project" value="InterPro"/>
</dbReference>
<dbReference type="CDD" id="cd06453">
    <property type="entry name" value="SufS_like"/>
    <property type="match status" value="1"/>
</dbReference>
<dbReference type="Gene3D" id="3.90.1150.10">
    <property type="entry name" value="Aspartate Aminotransferase, domain 1"/>
    <property type="match status" value="1"/>
</dbReference>
<dbReference type="Gene3D" id="3.40.640.10">
    <property type="entry name" value="Type I PLP-dependent aspartate aminotransferase-like (Major domain)"/>
    <property type="match status" value="1"/>
</dbReference>
<dbReference type="InterPro" id="IPR000192">
    <property type="entry name" value="Aminotrans_V_dom"/>
</dbReference>
<dbReference type="InterPro" id="IPR010970">
    <property type="entry name" value="Cys_dSase_SufS"/>
</dbReference>
<dbReference type="InterPro" id="IPR015424">
    <property type="entry name" value="PyrdxlP-dep_Trfase"/>
</dbReference>
<dbReference type="InterPro" id="IPR015421">
    <property type="entry name" value="PyrdxlP-dep_Trfase_major"/>
</dbReference>
<dbReference type="InterPro" id="IPR015422">
    <property type="entry name" value="PyrdxlP-dep_Trfase_small"/>
</dbReference>
<dbReference type="NCBIfam" id="NF041166">
    <property type="entry name" value="f2_encap_cargo1"/>
    <property type="match status" value="1"/>
</dbReference>
<dbReference type="NCBIfam" id="TIGR01979">
    <property type="entry name" value="sufS"/>
    <property type="match status" value="1"/>
</dbReference>
<dbReference type="PANTHER" id="PTHR43586">
    <property type="entry name" value="CYSTEINE DESULFURASE"/>
    <property type="match status" value="1"/>
</dbReference>
<dbReference type="PANTHER" id="PTHR43586:SF8">
    <property type="entry name" value="CYSTEINE DESULFURASE 1, CHLOROPLASTIC"/>
    <property type="match status" value="1"/>
</dbReference>
<dbReference type="Pfam" id="PF00266">
    <property type="entry name" value="Aminotran_5"/>
    <property type="match status" value="1"/>
</dbReference>
<dbReference type="SUPFAM" id="SSF53383">
    <property type="entry name" value="PLP-dependent transferases"/>
    <property type="match status" value="1"/>
</dbReference>
<name>CYD_MYCLE</name>
<accession>O32975</accession>
<gene>
    <name evidence="2" type="primary">cyd</name>
    <name type="synonym">csd1</name>
    <name type="ordered locus">ML0842</name>
    <name type="ORF">MLCB22.44c</name>
</gene>
<feature type="chain" id="PRO_0000150301" description="Probable cysteine desulfurase 1">
    <location>
        <begin position="1"/>
        <end position="611"/>
    </location>
</feature>
<feature type="region of interest" description="Cargo-loading domain" evidence="2">
    <location>
        <begin position="1"/>
        <end position="208"/>
    </location>
</feature>
<feature type="active site" description="Cysteine persulfide intermediate" evidence="1">
    <location>
        <position position="566"/>
    </location>
</feature>
<feature type="modified residue" description="N6-(pyridoxal phosphate)lysine" evidence="1">
    <location>
        <position position="428"/>
    </location>
</feature>
<sequence>MRATQLYAASFRPGFDSPPQLVPVALRGSAPDTTTVASAGELAVGTTDPCPAPVAQIGVADVYVPAPTSPEPEGLPQVAPVFSRGNVPDTTAVPAAAGTTVGVADPYLPPGVGHLSGFAVPSHGIVPTVPGVLAGGPPTAPVAPRNSAPVLRPEWPYHVPSVSDLDWFDAVPAGVPGGDEHNYNFLIAAPQVPRLADEHEMVDVFDIQAVRADFPILQETVNGKPLIWFDNAATTQKPQVVIDRLSYFYAHENSNIHRAAHELAARATDAYEEARETARRFIGAAKAQEIIFVRGTTEAINLVAYAWGGKHLQPGDEVVITHLEHHANIVPWQLLSSQTGAILKVAPVDDAGNLLMSEFEDLLGPRTKLVAATQVSNALGTVTQGEKIVELGHRYGARVLIDGAQSIPHLPINVSELGADFFVFSGHKIYGPTGIGVLYGCEDVLTEMPPWQGGGNMIVDVTLERSLYQGPPNKFEAGTGNIADAVGLGEALRYVERVGVQRIASHEQALLDYATPRLADIPGVRLVGTATEKASVLSFVLAGHEPLEVGKALNAEGIAVRAGHHCAQPVLRRLGLEATVRPSFAFYNTYEEIDVFINVVRRIAEGGTNIG</sequence>
<organism>
    <name type="scientific">Mycobacterium leprae (strain TN)</name>
    <dbReference type="NCBI Taxonomy" id="272631"/>
    <lineage>
        <taxon>Bacteria</taxon>
        <taxon>Bacillati</taxon>
        <taxon>Actinomycetota</taxon>
        <taxon>Actinomycetes</taxon>
        <taxon>Mycobacteriales</taxon>
        <taxon>Mycobacteriaceae</taxon>
        <taxon>Mycobacterium</taxon>
    </lineage>
</organism>
<proteinExistence type="inferred from homology"/>
<protein>
    <recommendedName>
        <fullName>Probable cysteine desulfurase 1</fullName>
        <ecNumber>2.8.1.7</ecNumber>
    </recommendedName>
</protein>